<proteinExistence type="evidence at protein level"/>
<dbReference type="EC" id="2.1.1.-" evidence="1"/>
<dbReference type="EMBL" id="CP000077">
    <property type="protein sequence ID" value="AAY80013.1"/>
    <property type="molecule type" value="Genomic_DNA"/>
</dbReference>
<dbReference type="RefSeq" id="WP_011277515.1">
    <property type="nucleotide sequence ID" value="NC_007181.1"/>
</dbReference>
<dbReference type="PDB" id="4CNF">
    <property type="method" value="X-ray"/>
    <property type="resolution" value="1.40 A"/>
    <property type="chains" value="A/B=1-235"/>
</dbReference>
<dbReference type="PDB" id="4CNG">
    <property type="method" value="X-ray"/>
    <property type="resolution" value="1.10 A"/>
    <property type="chains" value="A/B=1-235"/>
</dbReference>
<dbReference type="PDBsum" id="4CNF"/>
<dbReference type="PDBsum" id="4CNG"/>
<dbReference type="SMR" id="Q4JB16"/>
<dbReference type="STRING" id="330779.Saci_0621"/>
<dbReference type="GeneID" id="14551142"/>
<dbReference type="GeneID" id="78440964"/>
<dbReference type="KEGG" id="sai:Saci_0621"/>
<dbReference type="PATRIC" id="fig|330779.12.peg.600"/>
<dbReference type="eggNOG" id="arCOG01018">
    <property type="taxonomic scope" value="Archaea"/>
</dbReference>
<dbReference type="HOGENOM" id="CLU_056931_3_0_2"/>
<dbReference type="BRENDA" id="2.1.1.200">
    <property type="organism ID" value="6160"/>
</dbReference>
<dbReference type="EvolutionaryTrace" id="Q4JB16"/>
<dbReference type="Proteomes" id="UP000001018">
    <property type="component" value="Chromosome"/>
</dbReference>
<dbReference type="GO" id="GO:0005829">
    <property type="term" value="C:cytosol"/>
    <property type="evidence" value="ECO:0007669"/>
    <property type="project" value="TreeGrafter"/>
</dbReference>
<dbReference type="GO" id="GO:0003723">
    <property type="term" value="F:RNA binding"/>
    <property type="evidence" value="ECO:0007669"/>
    <property type="project" value="InterPro"/>
</dbReference>
<dbReference type="GO" id="GO:0160206">
    <property type="term" value="F:tRNA (cytidine(32)/uridine(32)-2'-O)-methyltransferase activity"/>
    <property type="evidence" value="ECO:0007669"/>
    <property type="project" value="RHEA"/>
</dbReference>
<dbReference type="GO" id="GO:0002128">
    <property type="term" value="P:tRNA nucleoside ribose methylation"/>
    <property type="evidence" value="ECO:0007669"/>
    <property type="project" value="TreeGrafter"/>
</dbReference>
<dbReference type="CDD" id="cd18093">
    <property type="entry name" value="SpoU-like_TrmJ"/>
    <property type="match status" value="1"/>
</dbReference>
<dbReference type="Gene3D" id="3.40.1280.10">
    <property type="match status" value="1"/>
</dbReference>
<dbReference type="InterPro" id="IPR029028">
    <property type="entry name" value="Alpha/beta_knot_MTases"/>
</dbReference>
<dbReference type="InterPro" id="IPR004384">
    <property type="entry name" value="RNA_MeTrfase_TrmJ/LasT"/>
</dbReference>
<dbReference type="InterPro" id="IPR001537">
    <property type="entry name" value="SpoU_MeTrfase"/>
</dbReference>
<dbReference type="InterPro" id="IPR053648">
    <property type="entry name" value="tRNA_Cytidine-2'-O-MTase"/>
</dbReference>
<dbReference type="InterPro" id="IPR029026">
    <property type="entry name" value="tRNA_m1G_MTases_N"/>
</dbReference>
<dbReference type="NCBIfam" id="NF041077">
    <property type="entry name" value="tRNAmeth_TrmJ_Sulfolob"/>
    <property type="match status" value="1"/>
</dbReference>
<dbReference type="PANTHER" id="PTHR42786:SF2">
    <property type="entry name" value="TRNA (CYTIDINE_URIDINE-2'-O-)-METHYLTRANSFERASE TRMJ"/>
    <property type="match status" value="1"/>
</dbReference>
<dbReference type="PANTHER" id="PTHR42786">
    <property type="entry name" value="TRNA/RRNA METHYLTRANSFERASE"/>
    <property type="match status" value="1"/>
</dbReference>
<dbReference type="Pfam" id="PF00588">
    <property type="entry name" value="SpoU_methylase"/>
    <property type="match status" value="1"/>
</dbReference>
<dbReference type="PIRSF" id="PIRSF004808">
    <property type="entry name" value="LasT"/>
    <property type="match status" value="1"/>
</dbReference>
<dbReference type="SUPFAM" id="SSF75217">
    <property type="entry name" value="alpha/beta knot"/>
    <property type="match status" value="1"/>
</dbReference>
<reference key="1">
    <citation type="journal article" date="2005" name="J. Bacteriol.">
        <title>The genome of Sulfolobus acidocaldarius, a model organism of the Crenarchaeota.</title>
        <authorList>
            <person name="Chen L."/>
            <person name="Bruegger K."/>
            <person name="Skovgaard M."/>
            <person name="Redder P."/>
            <person name="She Q."/>
            <person name="Torarinsson E."/>
            <person name="Greve B."/>
            <person name="Awayez M."/>
            <person name="Zibat A."/>
            <person name="Klenk H.-P."/>
            <person name="Garrett R.A."/>
        </authorList>
    </citation>
    <scope>NUCLEOTIDE SEQUENCE [LARGE SCALE GENOMIC DNA]</scope>
    <source>
        <strain>ATCC 33909 / DSM 639 / JCM 8929 / NBRC 15157 / NCIMB 11770</strain>
    </source>
</reference>
<reference evidence="6 7" key="2">
    <citation type="journal article" date="2014" name="RNA">
        <title>Characterization of two homologous 2'-O-methyltransferases showing different specificities for their tRNA substrates.</title>
        <authorList>
            <person name="Somme J."/>
            <person name="Van Laer B."/>
            <person name="Roovers M."/>
            <person name="Steyaert J."/>
            <person name="Versees W."/>
            <person name="Droogmans L."/>
        </authorList>
    </citation>
    <scope>X-RAY CRYSTALLOGRAPHY (1.10 ANGSTROMS) IN COMPLEXES WITH 5'-DEOXY-5'-METHYLTHIOADENOSINE AND S-ADENOSYL-L-HOMOCYSTEINE</scope>
    <scope>FUNCTION</scope>
    <scope>CATALYTIC ACTIVITY</scope>
    <scope>SUBUNIT</scope>
    <scope>MUTAGENESIS OF GLU-11; TYR-14; ARG-21; LYS-45; PHE-46; SER-47; LYS-49; SER-79; ILE-80; LYS-84; ARG-89; SER-114; ARG-119; TYR-137; PRO-138 AND VAL-139</scope>
</reference>
<accession>Q4JB16</accession>
<protein>
    <recommendedName>
        <fullName evidence="3">tRNA (cytidine-2'-O-)-methyltransferase TrmJ</fullName>
        <ecNumber evidence="1">2.1.1.-</ecNumber>
    </recommendedName>
    <alternativeName>
        <fullName evidence="3">tRNA (cytidine(32)-2'-O)-methyltransferase</fullName>
    </alternativeName>
    <alternativeName>
        <fullName evidence="3">tRNA Cm32 methyltransferase</fullName>
    </alternativeName>
</protein>
<sequence>MTIRLVIVEPEGAYNLGFIARLVKNFLIDEFYVVNPKCDINEAIKFSAKGSEVIEKMMKITNNFDDAIRDVDLKIATSSIADIKGDLLRKSIRPIDLERLIKDKKVAFIFGRESVGLTREEIAKSDFLLFIPANPEYPVLNLSHAVGIVLYELWRNRDNKVPTVSSEPIKLIDDYSKKITDILVNKEATKSMYLVLKRVLIKGIEDNEEAMTIVRILRKIYVRLAKKENESDKLL</sequence>
<comment type="function">
    <text evidence="1">Catalyzes the formation of 2'O-methylated cytidine (Cm32) at position 32 in tRNA. Is specific for cytidine.</text>
</comment>
<comment type="catalytic activity">
    <reaction evidence="1">
        <text>cytidine(32) in tRNA + S-adenosyl-L-methionine = 2'-O-methylcytidine(32) in tRNA + S-adenosyl-L-homocysteine + H(+)</text>
        <dbReference type="Rhea" id="RHEA:42932"/>
        <dbReference type="Rhea" id="RHEA-COMP:10288"/>
        <dbReference type="Rhea" id="RHEA-COMP:10289"/>
        <dbReference type="ChEBI" id="CHEBI:15378"/>
        <dbReference type="ChEBI" id="CHEBI:57856"/>
        <dbReference type="ChEBI" id="CHEBI:59789"/>
        <dbReference type="ChEBI" id="CHEBI:74495"/>
        <dbReference type="ChEBI" id="CHEBI:82748"/>
    </reaction>
</comment>
<comment type="subunit">
    <text evidence="1">Homodimer.</text>
</comment>
<comment type="subcellular location">
    <subcellularLocation>
        <location evidence="3">Cytoplasm</location>
    </subcellularLocation>
</comment>
<comment type="similarity">
    <text evidence="3">Belongs to the class IV-like SAM-binding methyltransferase superfamily. RNA methyltransferase TrmH family.</text>
</comment>
<keyword id="KW-0002">3D-structure</keyword>
<keyword id="KW-0963">Cytoplasm</keyword>
<keyword id="KW-0489">Methyltransferase</keyword>
<keyword id="KW-1185">Reference proteome</keyword>
<keyword id="KW-0949">S-adenosyl-L-methionine</keyword>
<keyword id="KW-0808">Transferase</keyword>
<keyword id="KW-0819">tRNA processing</keyword>
<feature type="chain" id="PRO_0000442205" description="tRNA (cytidine-2'-O-)-methyltransferase TrmJ">
    <location>
        <begin position="1"/>
        <end position="235"/>
    </location>
</feature>
<feature type="binding site" evidence="4">
    <location>
        <begin position="77"/>
        <end position="79"/>
    </location>
    <ligand>
        <name>S-adenosyl-L-methionine</name>
        <dbReference type="ChEBI" id="CHEBI:59789"/>
    </ligand>
</feature>
<feature type="binding site" evidence="4">
    <location>
        <position position="111"/>
    </location>
    <ligand>
        <name>S-adenosyl-L-methionine</name>
        <dbReference type="ChEBI" id="CHEBI:59789"/>
    </ligand>
</feature>
<feature type="binding site" evidence="4">
    <location>
        <position position="131"/>
    </location>
    <ligand>
        <name>S-adenosyl-L-methionine</name>
        <dbReference type="ChEBI" id="CHEBI:59789"/>
    </ligand>
</feature>
<feature type="binding site" evidence="4">
    <location>
        <begin position="138"/>
        <end position="140"/>
    </location>
    <ligand>
        <name>S-adenosyl-L-methionine</name>
        <dbReference type="ChEBI" id="CHEBI:59789"/>
    </ligand>
</feature>
<feature type="mutagenesis site" description="No change in activity." evidence="1">
    <original>E</original>
    <variation>S</variation>
    <location>
        <position position="11"/>
    </location>
</feature>
<feature type="mutagenesis site" description="No change in activity." evidence="1">
    <original>Y</original>
    <variation>S</variation>
    <location>
        <position position="14"/>
    </location>
</feature>
<feature type="mutagenesis site" description="Loss of activity." evidence="1">
    <original>R</original>
    <variation>A</variation>
    <location>
        <position position="21"/>
    </location>
</feature>
<feature type="mutagenesis site" description="Decrease in activity." evidence="1">
    <original>K</original>
    <variation>E</variation>
    <location>
        <position position="45"/>
    </location>
</feature>
<feature type="mutagenesis site" description="Loss of activity." evidence="1">
    <original>F</original>
    <variation>A</variation>
    <location>
        <position position="46"/>
    </location>
</feature>
<feature type="mutagenesis site" description="Decrease in activity." evidence="1">
    <original>S</original>
    <variation>L</variation>
    <location>
        <position position="47"/>
    </location>
</feature>
<feature type="mutagenesis site" description="Loss of activity." evidence="1">
    <original>K</original>
    <variation>E</variation>
    <location>
        <position position="49"/>
    </location>
</feature>
<feature type="mutagenesis site" description="No change in activity." evidence="1">
    <original>K</original>
    <variation>G</variation>
    <location>
        <position position="49"/>
    </location>
</feature>
<feature type="mutagenesis site" description="No change in activity." evidence="1">
    <original>S</original>
    <variation>A</variation>
    <location>
        <position position="79"/>
    </location>
</feature>
<feature type="mutagenesis site" description="No change in activity." evidence="1">
    <original>I</original>
    <variation>R</variation>
    <location>
        <position position="80"/>
    </location>
</feature>
<feature type="mutagenesis site" description="Decrease in activity." evidence="1">
    <original>K</original>
    <variation>E</variation>
    <location>
        <position position="84"/>
    </location>
</feature>
<feature type="mutagenesis site" description="Loss of activity." evidence="1">
    <original>R</original>
    <variation>E</variation>
    <location>
        <position position="89"/>
    </location>
</feature>
<feature type="mutagenesis site" description="Decrease in activity." evidence="1">
    <original>S</original>
    <variation>R</variation>
    <location>
        <position position="114"/>
    </location>
</feature>
<feature type="mutagenesis site" description="Loss of activity." evidence="1">
    <original>R</original>
    <variation>E</variation>
    <location>
        <position position="119"/>
    </location>
</feature>
<feature type="mutagenesis site" description="Decrease in activity." evidence="1">
    <original>R</original>
    <variation>N</variation>
    <location>
        <position position="119"/>
    </location>
</feature>
<feature type="mutagenesis site" description="Strong decrease in activity." evidence="1">
    <original>Y</original>
    <variation>F</variation>
    <location>
        <position position="137"/>
    </location>
</feature>
<feature type="mutagenesis site" description="No change in activity." evidence="1">
    <original>P</original>
    <variation>S</variation>
    <location>
        <position position="138"/>
    </location>
</feature>
<feature type="mutagenesis site" description="No change in activity." evidence="1">
    <original>V</original>
    <variation>S</variation>
    <location>
        <position position="139"/>
    </location>
</feature>
<feature type="strand" evidence="8">
    <location>
        <begin position="2"/>
        <end position="9"/>
    </location>
</feature>
<feature type="helix" evidence="8">
    <location>
        <begin position="13"/>
        <end position="25"/>
    </location>
</feature>
<feature type="strand" evidence="8">
    <location>
        <begin position="29"/>
        <end position="35"/>
    </location>
</feature>
<feature type="helix" evidence="8">
    <location>
        <begin position="40"/>
        <end position="44"/>
    </location>
</feature>
<feature type="helix" evidence="8">
    <location>
        <begin position="48"/>
        <end position="50"/>
    </location>
</feature>
<feature type="helix" evidence="8">
    <location>
        <begin position="51"/>
        <end position="55"/>
    </location>
</feature>
<feature type="strand" evidence="8">
    <location>
        <begin position="59"/>
        <end position="63"/>
    </location>
</feature>
<feature type="helix" evidence="8">
    <location>
        <begin position="64"/>
        <end position="67"/>
    </location>
</feature>
<feature type="strand" evidence="8">
    <location>
        <begin position="72"/>
        <end position="77"/>
    </location>
</feature>
<feature type="helix" evidence="8">
    <location>
        <begin position="85"/>
        <end position="90"/>
    </location>
</feature>
<feature type="helix" evidence="8">
    <location>
        <begin position="94"/>
        <end position="96"/>
    </location>
</feature>
<feature type="helix" evidence="8">
    <location>
        <begin position="97"/>
        <end position="101"/>
    </location>
</feature>
<feature type="strand" evidence="8">
    <location>
        <begin position="104"/>
        <end position="110"/>
    </location>
</feature>
<feature type="turn" evidence="8">
    <location>
        <begin position="113"/>
        <end position="115"/>
    </location>
</feature>
<feature type="helix" evidence="8">
    <location>
        <begin position="119"/>
        <end position="123"/>
    </location>
</feature>
<feature type="strand" evidence="8">
    <location>
        <begin position="125"/>
        <end position="129"/>
    </location>
</feature>
<feature type="helix" evidence="8">
    <location>
        <begin position="142"/>
        <end position="155"/>
    </location>
</feature>
<evidence type="ECO:0000269" key="1">
    <source>
    </source>
</evidence>
<evidence type="ECO:0000303" key="2">
    <source>
    </source>
</evidence>
<evidence type="ECO:0000305" key="3"/>
<evidence type="ECO:0000305" key="4">
    <source>
    </source>
</evidence>
<evidence type="ECO:0000312" key="5">
    <source>
        <dbReference type="EMBL" id="AAY80013.1"/>
    </source>
</evidence>
<evidence type="ECO:0007744" key="6">
    <source>
        <dbReference type="PDB" id="4CNF"/>
    </source>
</evidence>
<evidence type="ECO:0007744" key="7">
    <source>
        <dbReference type="PDB" id="4CNG"/>
    </source>
</evidence>
<evidence type="ECO:0007829" key="8">
    <source>
        <dbReference type="PDB" id="4CNG"/>
    </source>
</evidence>
<organism>
    <name type="scientific">Sulfolobus acidocaldarius (strain ATCC 33909 / DSM 639 / JCM 8929 / NBRC 15157 / NCIMB 11770)</name>
    <dbReference type="NCBI Taxonomy" id="330779"/>
    <lineage>
        <taxon>Archaea</taxon>
        <taxon>Thermoproteota</taxon>
        <taxon>Thermoprotei</taxon>
        <taxon>Sulfolobales</taxon>
        <taxon>Sulfolobaceae</taxon>
        <taxon>Sulfolobus</taxon>
    </lineage>
</organism>
<name>TRMJ_SULAC</name>
<gene>
    <name evidence="2" type="primary">trmJ</name>
    <name evidence="5" type="ordered locus">Saci_0621</name>
</gene>